<proteinExistence type="inferred from homology"/>
<name>CRTM_STAAC</name>
<comment type="function">
    <text evidence="2">Involved in the biosynthesis of the yellow-orange carotenoid staphyloxanthin, which plays a role in the virulence via its protective function against oxidative stress. Catalyzes the head-to-head condensation of two molecules of farnesyl diphosphate (FPP) into the colorless C(30) carotenoid 4,4'-diapophytoene (dehydrosqualene).</text>
</comment>
<comment type="catalytic activity">
    <reaction evidence="2">
        <text>2 (2E,6E)-farnesyl diphosphate = 15-cis-4,4'-diapophytoene + 2 diphosphate</text>
        <dbReference type="Rhea" id="RHEA:31547"/>
        <dbReference type="ChEBI" id="CHEBI:33019"/>
        <dbReference type="ChEBI" id="CHEBI:62738"/>
        <dbReference type="ChEBI" id="CHEBI:175763"/>
        <dbReference type="EC" id="2.5.1.96"/>
    </reaction>
</comment>
<comment type="cofactor">
    <cofactor evidence="1">
        <name>Mg(2+)</name>
        <dbReference type="ChEBI" id="CHEBI:18420"/>
    </cofactor>
    <text evidence="1">Binds 2 Mg(2+) ions per subunit.</text>
</comment>
<comment type="pathway">
    <text evidence="2">Carotenoid biosynthesis; staphyloxanthin biosynthesis; staphyloxanthin from farnesyl diphosphate: step 1/5.</text>
</comment>
<comment type="similarity">
    <text evidence="3">Belongs to the phytoene/squalene synthase family. CrtM subfamily.</text>
</comment>
<protein>
    <recommendedName>
        <fullName evidence="2">4,4'-diapophytoene synthase</fullName>
        <shortName evidence="2">DAP synthase</shortName>
        <ecNumber evidence="2">2.5.1.96</ecNumber>
    </recommendedName>
    <alternativeName>
        <fullName evidence="2">C30 carotenoid synthase</fullName>
    </alternativeName>
    <alternativeName>
        <fullName evidence="2">Dehydrosqualene synthase</fullName>
    </alternativeName>
</protein>
<accession>Q5HCY8</accession>
<dbReference type="EC" id="2.5.1.96" evidence="2"/>
<dbReference type="EMBL" id="CP000046">
    <property type="protein sequence ID" value="AAW38579.1"/>
    <property type="molecule type" value="Genomic_DNA"/>
</dbReference>
<dbReference type="RefSeq" id="WP_000178307.1">
    <property type="nucleotide sequence ID" value="NZ_JBGOFO010000001.1"/>
</dbReference>
<dbReference type="SMR" id="Q5HCY8"/>
<dbReference type="KEGG" id="sac:SACOL2577"/>
<dbReference type="HOGENOM" id="CLU_037269_1_3_9"/>
<dbReference type="UniPathway" id="UPA00029">
    <property type="reaction ID" value="UER00556"/>
</dbReference>
<dbReference type="Proteomes" id="UP000000530">
    <property type="component" value="Chromosome"/>
</dbReference>
<dbReference type="GO" id="GO:0004311">
    <property type="term" value="F:geranylgeranyl diphosphate synthase activity"/>
    <property type="evidence" value="ECO:0007669"/>
    <property type="project" value="InterPro"/>
</dbReference>
<dbReference type="GO" id="GO:0046872">
    <property type="term" value="F:metal ion binding"/>
    <property type="evidence" value="ECO:0007669"/>
    <property type="project" value="UniProtKB-KW"/>
</dbReference>
<dbReference type="GO" id="GO:0051996">
    <property type="term" value="F:squalene synthase [NAD(P)H] activity"/>
    <property type="evidence" value="ECO:0007669"/>
    <property type="project" value="InterPro"/>
</dbReference>
<dbReference type="GO" id="GO:0016117">
    <property type="term" value="P:carotenoid biosynthetic process"/>
    <property type="evidence" value="ECO:0007669"/>
    <property type="project" value="UniProtKB-KW"/>
</dbReference>
<dbReference type="CDD" id="cd00683">
    <property type="entry name" value="Trans_IPPS_HH"/>
    <property type="match status" value="1"/>
</dbReference>
<dbReference type="FunFam" id="1.10.600.10:FF:000028">
    <property type="entry name" value="Dehydrosqualene synthase"/>
    <property type="match status" value="1"/>
</dbReference>
<dbReference type="Gene3D" id="1.10.600.10">
    <property type="entry name" value="Farnesyl Diphosphate Synthase"/>
    <property type="match status" value="1"/>
</dbReference>
<dbReference type="InterPro" id="IPR008949">
    <property type="entry name" value="Isoprenoid_synthase_dom_sf"/>
</dbReference>
<dbReference type="InterPro" id="IPR002060">
    <property type="entry name" value="Squ/phyt_synthse"/>
</dbReference>
<dbReference type="InterPro" id="IPR019845">
    <property type="entry name" value="Squalene/phytoene_synthase_CS"/>
</dbReference>
<dbReference type="InterPro" id="IPR044843">
    <property type="entry name" value="Trans_IPPS_bact-type"/>
</dbReference>
<dbReference type="InterPro" id="IPR033904">
    <property type="entry name" value="Trans_IPPS_HH"/>
</dbReference>
<dbReference type="PANTHER" id="PTHR31480">
    <property type="entry name" value="BIFUNCTIONAL LYCOPENE CYCLASE/PHYTOENE SYNTHASE"/>
    <property type="match status" value="1"/>
</dbReference>
<dbReference type="Pfam" id="PF00494">
    <property type="entry name" value="SQS_PSY"/>
    <property type="match status" value="1"/>
</dbReference>
<dbReference type="SFLD" id="SFLDG01212">
    <property type="entry name" value="Phytoene_synthase_like"/>
    <property type="match status" value="1"/>
</dbReference>
<dbReference type="SFLD" id="SFLDG01018">
    <property type="entry name" value="Squalene/Phytoene_Synthase_Lik"/>
    <property type="match status" value="1"/>
</dbReference>
<dbReference type="SUPFAM" id="SSF48576">
    <property type="entry name" value="Terpenoid synthases"/>
    <property type="match status" value="1"/>
</dbReference>
<dbReference type="PROSITE" id="PS01044">
    <property type="entry name" value="SQUALEN_PHYTOEN_SYN_1"/>
    <property type="match status" value="1"/>
</dbReference>
<evidence type="ECO:0000250" key="1">
    <source>
        <dbReference type="UniProtKB" id="A9JQL9"/>
    </source>
</evidence>
<evidence type="ECO:0000250" key="2">
    <source>
        <dbReference type="UniProtKB" id="Q2FV59"/>
    </source>
</evidence>
<evidence type="ECO:0000305" key="3"/>
<keyword id="KW-0125">Carotenoid biosynthesis</keyword>
<keyword id="KW-0460">Magnesium</keyword>
<keyword id="KW-0479">Metal-binding</keyword>
<keyword id="KW-0808">Transferase</keyword>
<keyword id="KW-0843">Virulence</keyword>
<feature type="chain" id="PRO_0000282619" description="4,4'-diapophytoene synthase">
    <location>
        <begin position="1"/>
        <end position="287"/>
    </location>
</feature>
<feature type="binding site" evidence="1">
    <location>
        <begin position="18"/>
        <end position="21"/>
    </location>
    <ligand>
        <name>(2E,6E)-farnesyl diphosphate</name>
        <dbReference type="ChEBI" id="CHEBI:175763"/>
        <label>1</label>
    </ligand>
</feature>
<feature type="binding site" evidence="1">
    <location>
        <position position="41"/>
    </location>
    <ligand>
        <name>(2E,6E)-farnesyl diphosphate</name>
        <dbReference type="ChEBI" id="CHEBI:175763"/>
        <label>1</label>
    </ligand>
</feature>
<feature type="binding site" evidence="1">
    <location>
        <position position="45"/>
    </location>
    <ligand>
        <name>(2E,6E)-farnesyl diphosphate</name>
        <dbReference type="ChEBI" id="CHEBI:175763"/>
        <label>1</label>
    </ligand>
</feature>
<feature type="binding site" evidence="1">
    <location>
        <position position="45"/>
    </location>
    <ligand>
        <name>(2E,6E)-farnesyl diphosphate</name>
        <dbReference type="ChEBI" id="CHEBI:175763"/>
        <label>2</label>
    </ligand>
</feature>
<feature type="binding site" evidence="1">
    <location>
        <position position="48"/>
    </location>
    <ligand>
        <name>Mg(2+)</name>
        <dbReference type="ChEBI" id="CHEBI:18420"/>
        <label>1</label>
    </ligand>
</feature>
<feature type="binding site" evidence="1">
    <location>
        <position position="52"/>
    </location>
    <ligand>
        <name>Mg(2+)</name>
        <dbReference type="ChEBI" id="CHEBI:18420"/>
        <label>1</label>
    </ligand>
</feature>
<feature type="binding site" evidence="1">
    <location>
        <position position="165"/>
    </location>
    <ligand>
        <name>(2E,6E)-farnesyl diphosphate</name>
        <dbReference type="ChEBI" id="CHEBI:175763"/>
        <label>2</label>
    </ligand>
</feature>
<feature type="binding site" evidence="1">
    <location>
        <position position="168"/>
    </location>
    <ligand>
        <name>Mg(2+)</name>
        <dbReference type="ChEBI" id="CHEBI:18420"/>
        <label>2</label>
    </ligand>
</feature>
<feature type="binding site" evidence="1">
    <location>
        <position position="171"/>
    </location>
    <ligand>
        <name>(2E,6E)-farnesyl diphosphate</name>
        <dbReference type="ChEBI" id="CHEBI:175763"/>
        <label>1</label>
    </ligand>
</feature>
<feature type="binding site" evidence="1">
    <location>
        <position position="172"/>
    </location>
    <ligand>
        <name>Mg(2+)</name>
        <dbReference type="ChEBI" id="CHEBI:18420"/>
        <label>2</label>
    </ligand>
</feature>
<feature type="binding site" evidence="1">
    <location>
        <position position="248"/>
    </location>
    <ligand>
        <name>(2E,6E)-farnesyl diphosphate</name>
        <dbReference type="ChEBI" id="CHEBI:175763"/>
        <label>1</label>
    </ligand>
</feature>
<gene>
    <name type="primary">crtM</name>
    <name type="ordered locus">SACOL2577</name>
</gene>
<reference key="1">
    <citation type="journal article" date="2005" name="J. Bacteriol.">
        <title>Insights on evolution of virulence and resistance from the complete genome analysis of an early methicillin-resistant Staphylococcus aureus strain and a biofilm-producing methicillin-resistant Staphylococcus epidermidis strain.</title>
        <authorList>
            <person name="Gill S.R."/>
            <person name="Fouts D.E."/>
            <person name="Archer G.L."/>
            <person name="Mongodin E.F."/>
            <person name="DeBoy R.T."/>
            <person name="Ravel J."/>
            <person name="Paulsen I.T."/>
            <person name="Kolonay J.F."/>
            <person name="Brinkac L.M."/>
            <person name="Beanan M.J."/>
            <person name="Dodson R.J."/>
            <person name="Daugherty S.C."/>
            <person name="Madupu R."/>
            <person name="Angiuoli S.V."/>
            <person name="Durkin A.S."/>
            <person name="Haft D.H."/>
            <person name="Vamathevan J.J."/>
            <person name="Khouri H."/>
            <person name="Utterback T.R."/>
            <person name="Lee C."/>
            <person name="Dimitrov G."/>
            <person name="Jiang L."/>
            <person name="Qin H."/>
            <person name="Weidman J."/>
            <person name="Tran K."/>
            <person name="Kang K.H."/>
            <person name="Hance I.R."/>
            <person name="Nelson K.E."/>
            <person name="Fraser C.M."/>
        </authorList>
    </citation>
    <scope>NUCLEOTIDE SEQUENCE [LARGE SCALE GENOMIC DNA]</scope>
    <source>
        <strain>COL</strain>
    </source>
</reference>
<organism>
    <name type="scientific">Staphylococcus aureus (strain COL)</name>
    <dbReference type="NCBI Taxonomy" id="93062"/>
    <lineage>
        <taxon>Bacteria</taxon>
        <taxon>Bacillati</taxon>
        <taxon>Bacillota</taxon>
        <taxon>Bacilli</taxon>
        <taxon>Bacillales</taxon>
        <taxon>Staphylococcaceae</taxon>
        <taxon>Staphylococcus</taxon>
    </lineage>
</organism>
<sequence length="287" mass="34231">MTMMDMNFKYCHKIMKKHSKSFSYAFDLLPEDQRKAVWAIYAVCRKIDDSIDVYGDIQFLNQIKEDIQSIEKYPYEHHHFQSDRRIMMALQHVAQHKNIAFQSFYNLIDTVYKDQHFTMFETDAELFGYCYGVAGTVGEVLTPILSDHETHQTYDVARRLGESLQLINILRDVGEDFDNERIYFSKQRLKQYEVDIAEVYQNGVNNHYIDLWEYYAAIAEKDFQDVMDQIKVFSIEAQPIIELAARIYIEILDEVRQANYTLHERVFVDKRKKAKLFHEINSKYHRI</sequence>